<accession>P64604</accession>
<accession>P45391</accession>
<accession>Q2M919</accession>
<proteinExistence type="evidence at protein level"/>
<gene>
    <name evidence="6" type="primary">mlaD</name>
    <name type="synonym">yrbD</name>
    <name type="ordered locus">b3193</name>
    <name type="ordered locus">JW3160</name>
</gene>
<name>MLAD_ECOLI</name>
<organism>
    <name type="scientific">Escherichia coli (strain K12)</name>
    <dbReference type="NCBI Taxonomy" id="83333"/>
    <lineage>
        <taxon>Bacteria</taxon>
        <taxon>Pseudomonadati</taxon>
        <taxon>Pseudomonadota</taxon>
        <taxon>Gammaproteobacteria</taxon>
        <taxon>Enterobacterales</taxon>
        <taxon>Enterobacteriaceae</taxon>
        <taxon>Escherichia</taxon>
    </lineage>
</organism>
<dbReference type="EMBL" id="U18997">
    <property type="protein sequence ID" value="AAA57994.1"/>
    <property type="molecule type" value="Genomic_DNA"/>
</dbReference>
<dbReference type="EMBL" id="U00096">
    <property type="protein sequence ID" value="AAC76225.1"/>
    <property type="molecule type" value="Genomic_DNA"/>
</dbReference>
<dbReference type="EMBL" id="AP009048">
    <property type="protein sequence ID" value="BAE77237.1"/>
    <property type="molecule type" value="Genomic_DNA"/>
</dbReference>
<dbReference type="PIR" id="C65110">
    <property type="entry name" value="C65110"/>
</dbReference>
<dbReference type="RefSeq" id="NP_417660.1">
    <property type="nucleotide sequence ID" value="NC_000913.3"/>
</dbReference>
<dbReference type="RefSeq" id="WP_001296448.1">
    <property type="nucleotide sequence ID" value="NZ_STEB01000012.1"/>
</dbReference>
<dbReference type="PDB" id="5UW2">
    <property type="method" value="X-ray"/>
    <property type="resolution" value="2.85 A"/>
    <property type="chains" value="A/B/C=32-183"/>
</dbReference>
<dbReference type="PDB" id="5UW8">
    <property type="method" value="X-ray"/>
    <property type="resolution" value="2.15 A"/>
    <property type="chains" value="A/B/C/D/E/F/G=32-140"/>
</dbReference>
<dbReference type="PDB" id="6ZY9">
    <property type="method" value="EM"/>
    <property type="resolution" value="3.30 A"/>
    <property type="chains" value="A/D/I/J/K/L=1-183"/>
</dbReference>
<dbReference type="PDB" id="7CGE">
    <property type="method" value="EM"/>
    <property type="resolution" value="2.90 A"/>
    <property type="chains" value="G/H/I/J/K/L=1-183"/>
</dbReference>
<dbReference type="PDB" id="7CGN">
    <property type="method" value="EM"/>
    <property type="resolution" value="4.30 A"/>
    <property type="chains" value="G/H/I/J/K/L=1-183"/>
</dbReference>
<dbReference type="PDB" id="7CH0">
    <property type="method" value="EM"/>
    <property type="resolution" value="3.70 A"/>
    <property type="chains" value="G/H/I/J/K/L=1-183"/>
</dbReference>
<dbReference type="PDB" id="8OJ4">
    <property type="method" value="EM"/>
    <property type="resolution" value="4.35 A"/>
    <property type="chains" value="A/B/C/D/E/F=1-183"/>
</dbReference>
<dbReference type="PDB" id="8OJG">
    <property type="method" value="EM"/>
    <property type="resolution" value="4.38 A"/>
    <property type="chains" value="A/B/C/D/E/F=1-183"/>
</dbReference>
<dbReference type="PDBsum" id="5UW2"/>
<dbReference type="PDBsum" id="5UW8"/>
<dbReference type="PDBsum" id="6ZY9"/>
<dbReference type="PDBsum" id="7CGE"/>
<dbReference type="PDBsum" id="7CGN"/>
<dbReference type="PDBsum" id="7CH0"/>
<dbReference type="PDBsum" id="8OJ4"/>
<dbReference type="PDBsum" id="8OJG"/>
<dbReference type="EMDB" id="EMD-16904"/>
<dbReference type="EMDB" id="EMD-16913"/>
<dbReference type="SMR" id="P64604"/>
<dbReference type="BioGRID" id="4262424">
    <property type="interactions" value="31"/>
</dbReference>
<dbReference type="ComplexPortal" id="CPX-3464">
    <property type="entry name" value="MlaFEDB lipid transport complex"/>
</dbReference>
<dbReference type="DIP" id="DIP-12906N"/>
<dbReference type="FunCoup" id="P64604">
    <property type="interactions" value="272"/>
</dbReference>
<dbReference type="IntAct" id="P64604">
    <property type="interactions" value="3"/>
</dbReference>
<dbReference type="MINT" id="P64604"/>
<dbReference type="STRING" id="511145.b3193"/>
<dbReference type="TCDB" id="3.A.1.27.3">
    <property type="family name" value="the atp-binding cassette (abc) superfamily"/>
</dbReference>
<dbReference type="jPOST" id="P64604"/>
<dbReference type="PaxDb" id="511145-b3193"/>
<dbReference type="EnsemblBacteria" id="AAC76225">
    <property type="protein sequence ID" value="AAC76225"/>
    <property type="gene ID" value="b3193"/>
</dbReference>
<dbReference type="GeneID" id="93778788"/>
<dbReference type="GeneID" id="947712"/>
<dbReference type="KEGG" id="ecj:JW3160"/>
<dbReference type="KEGG" id="eco:b3193"/>
<dbReference type="KEGG" id="ecoc:C3026_17380"/>
<dbReference type="PATRIC" id="fig|1411691.4.peg.3538"/>
<dbReference type="EchoBASE" id="EB2651"/>
<dbReference type="eggNOG" id="COG1463">
    <property type="taxonomic scope" value="Bacteria"/>
</dbReference>
<dbReference type="HOGENOM" id="CLU_107027_0_0_6"/>
<dbReference type="InParanoid" id="P64604"/>
<dbReference type="OMA" id="QYQFPKD"/>
<dbReference type="OrthoDB" id="9788420at2"/>
<dbReference type="PhylomeDB" id="P64604"/>
<dbReference type="BioCyc" id="EcoCyc:EG12799-MONOMER"/>
<dbReference type="PRO" id="PR:P64604"/>
<dbReference type="Proteomes" id="UP000000625">
    <property type="component" value="Chromosome"/>
</dbReference>
<dbReference type="GO" id="GO:0016020">
    <property type="term" value="C:membrane"/>
    <property type="evidence" value="ECO:0000303"/>
    <property type="project" value="ComplexPortal"/>
</dbReference>
<dbReference type="GO" id="GO:1990531">
    <property type="term" value="C:phospholipid-translocating ATPase complex"/>
    <property type="evidence" value="ECO:0000353"/>
    <property type="project" value="ComplexPortal"/>
</dbReference>
<dbReference type="GO" id="GO:0005886">
    <property type="term" value="C:plasma membrane"/>
    <property type="evidence" value="ECO:0000314"/>
    <property type="project" value="EcoCyc"/>
</dbReference>
<dbReference type="GO" id="GO:0005543">
    <property type="term" value="F:phospholipid binding"/>
    <property type="evidence" value="ECO:0000314"/>
    <property type="project" value="EcoCyc"/>
</dbReference>
<dbReference type="GO" id="GO:0120014">
    <property type="term" value="F:phospholipid transfer activity"/>
    <property type="evidence" value="ECO:0000314"/>
    <property type="project" value="EcoCyc"/>
</dbReference>
<dbReference type="GO" id="GO:0120010">
    <property type="term" value="P:intermembrane phospholipid transfer"/>
    <property type="evidence" value="ECO:0000314"/>
    <property type="project" value="EcoCyc"/>
</dbReference>
<dbReference type="GO" id="GO:0015914">
    <property type="term" value="P:phospholipid transport"/>
    <property type="evidence" value="ECO:0000303"/>
    <property type="project" value="ComplexPortal"/>
</dbReference>
<dbReference type="InterPro" id="IPR030970">
    <property type="entry name" value="ABC_MlaD"/>
</dbReference>
<dbReference type="InterPro" id="IPR003399">
    <property type="entry name" value="Mce/MlaD"/>
</dbReference>
<dbReference type="InterPro" id="IPR052336">
    <property type="entry name" value="MlaD_Phospholipid_Transporter"/>
</dbReference>
<dbReference type="NCBIfam" id="TIGR04430">
    <property type="entry name" value="OM_asym_MlaD"/>
    <property type="match status" value="1"/>
</dbReference>
<dbReference type="PANTHER" id="PTHR33371:SF4">
    <property type="entry name" value="INTERMEMBRANE PHOSPHOLIPID TRANSPORT SYSTEM BINDING PROTEIN MLAD"/>
    <property type="match status" value="1"/>
</dbReference>
<dbReference type="PANTHER" id="PTHR33371">
    <property type="entry name" value="INTERMEMBRANE PHOSPHOLIPID TRANSPORT SYSTEM BINDING PROTEIN MLAD-RELATED"/>
    <property type="match status" value="1"/>
</dbReference>
<dbReference type="Pfam" id="PF02470">
    <property type="entry name" value="MlaD"/>
    <property type="match status" value="1"/>
</dbReference>
<sequence length="183" mass="19576">MQTKKNEIWVGIFLLAALLAALFVCLKAANVTSIRTEPTYTLYATFDNIGGLKARSPVSIGGVVVGRVADITLDPKTYLPRVTLEIEQRYNHIPDTSSLSIRTSGLLGEQYLALNVGFEDPELGTAILKDGDTIQDTKSAMVLEDLIGQFLYGSKGDDNKNSGDAPAAAPGNNETTEPVGTTK</sequence>
<comment type="function">
    <text evidence="3 4">Part of the ABC transporter complex MlaFEDB, which is involved in a phospholipid transport pathway that maintains lipid asymmetry in the outer membrane by retrograde trafficking of phospholipids from the outer membrane to the inner membrane (PubMed:19383799, PubMed:27529189). MlaD functions in substrate binding with strong affinity for phospholipids and modulates ATP hydrolytic activity of the complex (PubMed:27529189).</text>
</comment>
<comment type="subunit">
    <text evidence="4 5 8">The complex is composed of two ATP-binding proteins (MlaF), two transmembrane proteins (MlaE), two cytoplasmic solute-binding proteins (MlaB) and six periplasmic solute-binding proteins (MlaD) (PubMed:27529189, PubMed:28388411). Interacts with MlaC (PubMed:28388411).</text>
</comment>
<comment type="subcellular location">
    <subcellularLocation>
        <location evidence="8">Cell inner membrane</location>
        <topology evidence="8">Single-pass type II membrane protein</topology>
        <orientation evidence="8">Periplasmic side</orientation>
    </subcellularLocation>
</comment>
<comment type="domain">
    <text evidence="4 5">Forms hexameric rings with a central hydrophobic pore via its periplasmic domain, which also binds phospholipids. Contains at least four binding sites.</text>
</comment>
<comment type="disruption phenotype">
    <text evidence="3">Mutation leads to accumulation of phospholipid in the outer leaflet of the outer membrane and increased outer membrane permeability. It confers sensitivity to SDS-EDTA.</text>
</comment>
<comment type="similarity">
    <text evidence="7">Belongs to the MlaD family.</text>
</comment>
<feature type="chain" id="PRO_0000013918" description="Intermembrane phospholipid transport system binding protein MlaD">
    <location>
        <begin position="1"/>
        <end position="183"/>
    </location>
</feature>
<feature type="topological domain" description="Cytoplasmic" evidence="8">
    <location>
        <begin position="1"/>
        <end position="7"/>
    </location>
</feature>
<feature type="transmembrane region" description="Helical; Signal-anchor for type II membrane protein" evidence="1">
    <location>
        <begin position="8"/>
        <end position="28"/>
    </location>
</feature>
<feature type="topological domain" description="Periplasmic" evidence="8">
    <location>
        <begin position="29"/>
        <end position="183"/>
    </location>
</feature>
<feature type="region of interest" description="MCE/MlaD" evidence="7">
    <location>
        <begin position="39"/>
        <end position="116"/>
    </location>
</feature>
<feature type="region of interest" description="Disordered" evidence="2">
    <location>
        <begin position="155"/>
        <end position="183"/>
    </location>
</feature>
<feature type="compositionally biased region" description="Polar residues" evidence="2">
    <location>
        <begin position="172"/>
        <end position="183"/>
    </location>
</feature>
<feature type="helix" evidence="10">
    <location>
        <begin position="5"/>
        <end position="26"/>
    </location>
</feature>
<feature type="turn" evidence="10">
    <location>
        <begin position="27"/>
        <end position="29"/>
    </location>
</feature>
<feature type="strand" evidence="10">
    <location>
        <begin position="39"/>
        <end position="43"/>
    </location>
</feature>
<feature type="strand" evidence="10">
    <location>
        <begin position="58"/>
        <end position="60"/>
    </location>
</feature>
<feature type="strand" evidence="10">
    <location>
        <begin position="63"/>
        <end position="68"/>
    </location>
</feature>
<feature type="strand" evidence="9">
    <location>
        <begin position="71"/>
        <end position="73"/>
    </location>
</feature>
<feature type="turn" evidence="10">
    <location>
        <begin position="75"/>
        <end position="77"/>
    </location>
</feature>
<feature type="strand" evidence="10">
    <location>
        <begin position="83"/>
        <end position="87"/>
    </location>
</feature>
<feature type="strand" evidence="10">
    <location>
        <begin position="104"/>
        <end position="108"/>
    </location>
</feature>
<feature type="strand" evidence="10">
    <location>
        <begin position="111"/>
        <end position="113"/>
    </location>
</feature>
<feature type="helix" evidence="10">
    <location>
        <begin position="144"/>
        <end position="151"/>
    </location>
</feature>
<reference key="1">
    <citation type="journal article" date="1997" name="Science">
        <title>The complete genome sequence of Escherichia coli K-12.</title>
        <authorList>
            <person name="Blattner F.R."/>
            <person name="Plunkett G. III"/>
            <person name="Bloch C.A."/>
            <person name="Perna N.T."/>
            <person name="Burland V."/>
            <person name="Riley M."/>
            <person name="Collado-Vides J."/>
            <person name="Glasner J.D."/>
            <person name="Rode C.K."/>
            <person name="Mayhew G.F."/>
            <person name="Gregor J."/>
            <person name="Davis N.W."/>
            <person name="Kirkpatrick H.A."/>
            <person name="Goeden M.A."/>
            <person name="Rose D.J."/>
            <person name="Mau B."/>
            <person name="Shao Y."/>
        </authorList>
    </citation>
    <scope>NUCLEOTIDE SEQUENCE [LARGE SCALE GENOMIC DNA]</scope>
    <source>
        <strain>K12 / MG1655 / ATCC 47076</strain>
    </source>
</reference>
<reference key="2">
    <citation type="journal article" date="2006" name="Mol. Syst. Biol.">
        <title>Highly accurate genome sequences of Escherichia coli K-12 strains MG1655 and W3110.</title>
        <authorList>
            <person name="Hayashi K."/>
            <person name="Morooka N."/>
            <person name="Yamamoto Y."/>
            <person name="Fujita K."/>
            <person name="Isono K."/>
            <person name="Choi S."/>
            <person name="Ohtsubo E."/>
            <person name="Baba T."/>
            <person name="Wanner B.L."/>
            <person name="Mori H."/>
            <person name="Horiuchi T."/>
        </authorList>
    </citation>
    <scope>NUCLEOTIDE SEQUENCE [LARGE SCALE GENOMIC DNA]</scope>
    <source>
        <strain>K12 / W3110 / ATCC 27325 / DSM 5911</strain>
    </source>
</reference>
<reference key="3">
    <citation type="journal article" date="2009" name="Proc. Natl. Acad. Sci. U.S.A.">
        <title>An ABC transport system that maintains lipid asymmetry in the gram-negative outer membrane.</title>
        <authorList>
            <person name="Malinverni J.C."/>
            <person name="Silhavy T.J."/>
        </authorList>
    </citation>
    <scope>FUNCTION IN PHOSPHOLIPID TRANSPORT</scope>
    <scope>SUBUNIT</scope>
    <scope>SUBCELLULAR LOCATION</scope>
    <scope>DISRUPTION PHENOTYPE</scope>
    <source>
        <strain>K12 / MC4100 / JA176</strain>
    </source>
</reference>
<reference key="4">
    <citation type="journal article" date="2016" name="Elife">
        <title>Defining key roles for auxiliary proteins in an ABC transporter that maintains bacterial outer membrane lipid asymmetry.</title>
        <authorList>
            <person name="Thong S."/>
            <person name="Ercan B."/>
            <person name="Torta F."/>
            <person name="Fong Z.Y."/>
            <person name="Wong H.Y."/>
            <person name="Wenk M.R."/>
            <person name="Chng S.S."/>
        </authorList>
    </citation>
    <scope>FUNCTION</scope>
    <scope>SUBUNIT</scope>
    <scope>PHOSPHOLIPID-BINDING</scope>
    <scope>DOMAIN</scope>
    <source>
        <strain>K12</strain>
    </source>
</reference>
<reference key="5">
    <citation type="journal article" date="2017" name="Cell">
        <title>Architectures of lipid transport systems for the bacterial outer membrane.</title>
        <authorList>
            <person name="Ekiert D.C."/>
            <person name="Bhabha G."/>
            <person name="Isom G.L."/>
            <person name="Greenan G."/>
            <person name="Ovchinnikov S."/>
            <person name="Henderson I.R."/>
            <person name="Cox J.S."/>
            <person name="Vale R.D."/>
        </authorList>
    </citation>
    <scope>X-RAY CRYSTALLOGRAPHY (2.15 ANGSTROMS) OF 32-183</scope>
    <scope>SUBUNIT</scope>
    <scope>INTERACTION WITH MLAC</scope>
    <scope>DOMAIN</scope>
    <source>
        <strain>K12</strain>
    </source>
</reference>
<protein>
    <recommendedName>
        <fullName evidence="7">Intermembrane phospholipid transport system binding protein MlaD</fullName>
    </recommendedName>
</protein>
<keyword id="KW-0002">3D-structure</keyword>
<keyword id="KW-0997">Cell inner membrane</keyword>
<keyword id="KW-1003">Cell membrane</keyword>
<keyword id="KW-0472">Membrane</keyword>
<keyword id="KW-1185">Reference proteome</keyword>
<keyword id="KW-0735">Signal-anchor</keyword>
<keyword id="KW-0812">Transmembrane</keyword>
<keyword id="KW-1133">Transmembrane helix</keyword>
<keyword id="KW-0813">Transport</keyword>
<evidence type="ECO:0000255" key="1"/>
<evidence type="ECO:0000256" key="2">
    <source>
        <dbReference type="SAM" id="MobiDB-lite"/>
    </source>
</evidence>
<evidence type="ECO:0000269" key="3">
    <source>
    </source>
</evidence>
<evidence type="ECO:0000269" key="4">
    <source>
    </source>
</evidence>
<evidence type="ECO:0000269" key="5">
    <source>
    </source>
</evidence>
<evidence type="ECO:0000303" key="6">
    <source>
    </source>
</evidence>
<evidence type="ECO:0000305" key="7"/>
<evidence type="ECO:0000305" key="8">
    <source>
    </source>
</evidence>
<evidence type="ECO:0007829" key="9">
    <source>
        <dbReference type="PDB" id="6ZY9"/>
    </source>
</evidence>
<evidence type="ECO:0007829" key="10">
    <source>
        <dbReference type="PDB" id="7CGE"/>
    </source>
</evidence>